<proteinExistence type="inferred from homology"/>
<evidence type="ECO:0000255" key="1">
    <source>
        <dbReference type="PROSITE-ProRule" id="PRU00303"/>
    </source>
</evidence>
<organism>
    <name type="scientific">Haemophilus influenzae (strain ATCC 51907 / DSM 11121 / KW20 / Rd)</name>
    <dbReference type="NCBI Taxonomy" id="71421"/>
    <lineage>
        <taxon>Bacteria</taxon>
        <taxon>Pseudomonadati</taxon>
        <taxon>Pseudomonadota</taxon>
        <taxon>Gammaproteobacteria</taxon>
        <taxon>Pasteurellales</taxon>
        <taxon>Pasteurellaceae</taxon>
        <taxon>Haemophilus</taxon>
    </lineage>
</organism>
<sequence>MKKYFLILASFMLVACSSSEQNLTYSTKPILNITSSLSPLIQVETTQKSAVIKNKSQQLLNISYHLYWYDHLGVTQIWENQQESYSAQFLLKPQEQKSIDLTKPTVESKNYRLYLK</sequence>
<gene>
    <name type="ordered locus">HI_0960</name>
</gene>
<protein>
    <recommendedName>
        <fullName>Uncharacterized protein HI_0960</fullName>
    </recommendedName>
</protein>
<reference key="1">
    <citation type="journal article" date="1995" name="Science">
        <title>Whole-genome random sequencing and assembly of Haemophilus influenzae Rd.</title>
        <authorList>
            <person name="Fleischmann R.D."/>
            <person name="Adams M.D."/>
            <person name="White O."/>
            <person name="Clayton R.A."/>
            <person name="Kirkness E.F."/>
            <person name="Kerlavage A.R."/>
            <person name="Bult C.J."/>
            <person name="Tomb J.-F."/>
            <person name="Dougherty B.A."/>
            <person name="Merrick J.M."/>
            <person name="McKenney K."/>
            <person name="Sutton G.G."/>
            <person name="FitzHugh W."/>
            <person name="Fields C.A."/>
            <person name="Gocayne J.D."/>
            <person name="Scott J.D."/>
            <person name="Shirley R."/>
            <person name="Liu L.-I."/>
            <person name="Glodek A."/>
            <person name="Kelley J.M."/>
            <person name="Weidman J.F."/>
            <person name="Phillips C.A."/>
            <person name="Spriggs T."/>
            <person name="Hedblom E."/>
            <person name="Cotton M.D."/>
            <person name="Utterback T.R."/>
            <person name="Hanna M.C."/>
            <person name="Nguyen D.T."/>
            <person name="Saudek D.M."/>
            <person name="Brandon R.C."/>
            <person name="Fine L.D."/>
            <person name="Fritchman J.L."/>
            <person name="Fuhrmann J.L."/>
            <person name="Geoghagen N.S.M."/>
            <person name="Gnehm C.L."/>
            <person name="McDonald L.A."/>
            <person name="Small K.V."/>
            <person name="Fraser C.M."/>
            <person name="Smith H.O."/>
            <person name="Venter J.C."/>
        </authorList>
    </citation>
    <scope>NUCLEOTIDE SEQUENCE [LARGE SCALE GENOMIC DNA]</scope>
    <source>
        <strain>ATCC 51907 / DSM 11121 / KW20 / Rd</strain>
    </source>
</reference>
<accession>P44084</accession>
<feature type="signal peptide" evidence="1">
    <location>
        <begin position="1"/>
        <end position="15"/>
    </location>
</feature>
<feature type="chain" id="PRO_0000013962" description="Uncharacterized protein HI_0960">
    <location>
        <begin position="16"/>
        <end position="116"/>
    </location>
</feature>
<keyword id="KW-1185">Reference proteome</keyword>
<keyword id="KW-0732">Signal</keyword>
<dbReference type="EMBL" id="L42023">
    <property type="protein sequence ID" value="AAC22628.1"/>
    <property type="molecule type" value="Genomic_DNA"/>
</dbReference>
<dbReference type="PIR" id="C64017">
    <property type="entry name" value="C64017"/>
</dbReference>
<dbReference type="RefSeq" id="NP_439121.1">
    <property type="nucleotide sequence ID" value="NC_000907.1"/>
</dbReference>
<dbReference type="SMR" id="P44084"/>
<dbReference type="STRING" id="71421.HI_0960"/>
<dbReference type="EnsemblBacteria" id="AAC22628">
    <property type="protein sequence ID" value="AAC22628"/>
    <property type="gene ID" value="HI_0960"/>
</dbReference>
<dbReference type="KEGG" id="hin:HI_0960"/>
<dbReference type="PATRIC" id="fig|71421.8.peg.1002"/>
<dbReference type="eggNOG" id="COG5633">
    <property type="taxonomic scope" value="Bacteria"/>
</dbReference>
<dbReference type="HOGENOM" id="CLU_163974_0_0_6"/>
<dbReference type="OrthoDB" id="5690781at2"/>
<dbReference type="BioCyc" id="HINF71421:G1GJ1-1001-MONOMER"/>
<dbReference type="Proteomes" id="UP000000579">
    <property type="component" value="Chromosome"/>
</dbReference>
<dbReference type="CDD" id="cd09030">
    <property type="entry name" value="DUF1425"/>
    <property type="match status" value="1"/>
</dbReference>
<dbReference type="Gene3D" id="2.60.40.3230">
    <property type="match status" value="1"/>
</dbReference>
<dbReference type="InterPro" id="IPR010824">
    <property type="entry name" value="DUF1425"/>
</dbReference>
<dbReference type="InterPro" id="IPR038483">
    <property type="entry name" value="YcfL-like_sf"/>
</dbReference>
<dbReference type="Pfam" id="PF07233">
    <property type="entry name" value="DUF1425"/>
    <property type="match status" value="1"/>
</dbReference>
<dbReference type="PROSITE" id="PS51257">
    <property type="entry name" value="PROKAR_LIPOPROTEIN"/>
    <property type="match status" value="1"/>
</dbReference>
<name>Y960_HAEIN</name>